<comment type="function">
    <text evidence="2">Core subunit of the mitochondrial membrane respiratory chain NADH dehydrogenase (Complex I) which catalyzes electron transfer from NADH through the respiratory chain, using ubiquinone as an electron acceptor. Part of the enzyme membrane arm which is embedded in the lipid bilayer and involved in proton translocation.</text>
</comment>
<comment type="catalytic activity">
    <reaction evidence="2">
        <text>a ubiquinone + NADH + 5 H(+)(in) = a ubiquinol + NAD(+) + 4 H(+)(out)</text>
        <dbReference type="Rhea" id="RHEA:29091"/>
        <dbReference type="Rhea" id="RHEA-COMP:9565"/>
        <dbReference type="Rhea" id="RHEA-COMP:9566"/>
        <dbReference type="ChEBI" id="CHEBI:15378"/>
        <dbReference type="ChEBI" id="CHEBI:16389"/>
        <dbReference type="ChEBI" id="CHEBI:17976"/>
        <dbReference type="ChEBI" id="CHEBI:57540"/>
        <dbReference type="ChEBI" id="CHEBI:57945"/>
        <dbReference type="EC" id="7.1.1.2"/>
    </reaction>
    <physiologicalReaction direction="left-to-right" evidence="2">
        <dbReference type="Rhea" id="RHEA:29092"/>
    </physiologicalReaction>
</comment>
<comment type="subcellular location">
    <subcellularLocation>
        <location evidence="1">Mitochondrion membrane</location>
        <topology evidence="1">Multi-pass membrane protein</topology>
    </subcellularLocation>
</comment>
<comment type="similarity">
    <text evidence="4">Belongs to the complex I subunit 4L family.</text>
</comment>
<proteinExistence type="inferred from homology"/>
<protein>
    <recommendedName>
        <fullName>NADH-ubiquinone oxidoreductase chain 4L</fullName>
        <ecNumber>7.1.1.2</ecNumber>
    </recommendedName>
    <alternativeName>
        <fullName>NADH dehydrogenase subunit 4L</fullName>
    </alternativeName>
</protein>
<accession>Q9ZZM5</accession>
<geneLocation type="mitochondrion"/>
<gene>
    <name type="primary">MT-ND4L</name>
    <name type="synonym">MTND4L</name>
    <name type="synonym">NADH4L</name>
    <name type="synonym">ND4L</name>
</gene>
<sequence length="98" mass="10527">MTPVHFSFTSAFILGLMGLAFHRTHLLSALLCLEGMMLSLFIALSLWALQMEAIGYSVAPMLLLAFSACEASAGLALLVATARTHGTDRLQSLNLLQC</sequence>
<feature type="chain" id="PRO_0000118486" description="NADH-ubiquinone oxidoreductase chain 4L">
    <location>
        <begin position="1"/>
        <end position="98"/>
    </location>
</feature>
<feature type="transmembrane region" description="Helical" evidence="3">
    <location>
        <begin position="1"/>
        <end position="21"/>
    </location>
</feature>
<feature type="transmembrane region" description="Helical" evidence="3">
    <location>
        <begin position="29"/>
        <end position="49"/>
    </location>
</feature>
<feature type="transmembrane region" description="Helical" evidence="3">
    <location>
        <begin position="58"/>
        <end position="78"/>
    </location>
</feature>
<name>NU4LM_SALSA</name>
<reference key="1">
    <citation type="submission" date="1998-10" db="EMBL/GenBank/DDBJ databases">
        <title>The complete nucleotide sequence of the mitochondrial DNA of the Atlantic salmon, Salmo salar.</title>
        <authorList>
            <person name="Hurst C.D."/>
            <person name="Bartlett S.E."/>
            <person name="Bruce I.J."/>
            <person name="Davidson W.S."/>
        </authorList>
    </citation>
    <scope>NUCLEOTIDE SEQUENCE [GENOMIC DNA]</scope>
    <source>
        <tissue>Liver</tissue>
    </source>
</reference>
<reference key="2">
    <citation type="submission" date="1999-03" db="EMBL/GenBank/DDBJ databases">
        <title>The complete mitochondrial genome sequence of a teleost, Salmo salar, and comparisons with other salmoniformes.</title>
        <authorList>
            <person name="Arnason U."/>
            <person name="Johnsson E."/>
            <person name="Rasmussen A.S."/>
        </authorList>
    </citation>
    <scope>NUCLEOTIDE SEQUENCE [GENOMIC DNA]</scope>
</reference>
<dbReference type="EC" id="7.1.1.2"/>
<dbReference type="EMBL" id="U12143">
    <property type="protein sequence ID" value="AAD04741.1"/>
    <property type="molecule type" value="Genomic_DNA"/>
</dbReference>
<dbReference type="EMBL" id="AF133701">
    <property type="protein sequence ID" value="AAF61386.1"/>
    <property type="molecule type" value="Genomic_DNA"/>
</dbReference>
<dbReference type="PIR" id="T09955">
    <property type="entry name" value="T09955"/>
</dbReference>
<dbReference type="RefSeq" id="NP_008453.1">
    <property type="nucleotide sequence ID" value="NC_001960.1"/>
</dbReference>
<dbReference type="SMR" id="Q9ZZM5"/>
<dbReference type="STRING" id="8030.ENSSSAP00000000010"/>
<dbReference type="PaxDb" id="8030-ENSSSAP00000000010"/>
<dbReference type="GeneID" id="808312"/>
<dbReference type="KEGG" id="sasa:808312"/>
<dbReference type="CTD" id="4539"/>
<dbReference type="Proteomes" id="UP000087266">
    <property type="component" value="Mitochondrion MT"/>
</dbReference>
<dbReference type="Bgee" id="ENSSSAG00000000028">
    <property type="expression patterns" value="Expressed in mesonephros and 25 other cell types or tissues"/>
</dbReference>
<dbReference type="GO" id="GO:0031966">
    <property type="term" value="C:mitochondrial membrane"/>
    <property type="evidence" value="ECO:0007669"/>
    <property type="project" value="UniProtKB-SubCell"/>
</dbReference>
<dbReference type="GO" id="GO:0045271">
    <property type="term" value="C:respiratory chain complex I"/>
    <property type="evidence" value="ECO:0000250"/>
    <property type="project" value="UniProtKB"/>
</dbReference>
<dbReference type="GO" id="GO:0008137">
    <property type="term" value="F:NADH dehydrogenase (ubiquinone) activity"/>
    <property type="evidence" value="ECO:0000250"/>
    <property type="project" value="UniProtKB"/>
</dbReference>
<dbReference type="GO" id="GO:0042773">
    <property type="term" value="P:ATP synthesis coupled electron transport"/>
    <property type="evidence" value="ECO:0007669"/>
    <property type="project" value="InterPro"/>
</dbReference>
<dbReference type="FunFam" id="1.10.287.3510:FF:000002">
    <property type="entry name" value="NADH-ubiquinone oxidoreductase chain 4L"/>
    <property type="match status" value="1"/>
</dbReference>
<dbReference type="Gene3D" id="1.10.287.3510">
    <property type="match status" value="1"/>
</dbReference>
<dbReference type="InterPro" id="IPR001133">
    <property type="entry name" value="NADH_UbQ_OxRdtase_chain4L/K"/>
</dbReference>
<dbReference type="InterPro" id="IPR039428">
    <property type="entry name" value="NUOK/Mnh_C1-like"/>
</dbReference>
<dbReference type="PANTHER" id="PTHR11434:SF0">
    <property type="entry name" value="NADH-UBIQUINONE OXIDOREDUCTASE CHAIN 4L"/>
    <property type="match status" value="1"/>
</dbReference>
<dbReference type="PANTHER" id="PTHR11434">
    <property type="entry name" value="NADH-UBIQUINONE OXIDOREDUCTASE SUBUNIT ND4L"/>
    <property type="match status" value="1"/>
</dbReference>
<dbReference type="Pfam" id="PF00420">
    <property type="entry name" value="Oxidored_q2"/>
    <property type="match status" value="1"/>
</dbReference>
<keyword id="KW-0249">Electron transport</keyword>
<keyword id="KW-0472">Membrane</keyword>
<keyword id="KW-0496">Mitochondrion</keyword>
<keyword id="KW-0520">NAD</keyword>
<keyword id="KW-1185">Reference proteome</keyword>
<keyword id="KW-0679">Respiratory chain</keyword>
<keyword id="KW-1278">Translocase</keyword>
<keyword id="KW-0812">Transmembrane</keyword>
<keyword id="KW-1133">Transmembrane helix</keyword>
<keyword id="KW-0813">Transport</keyword>
<keyword id="KW-0830">Ubiquinone</keyword>
<organism>
    <name type="scientific">Salmo salar</name>
    <name type="common">Atlantic salmon</name>
    <dbReference type="NCBI Taxonomy" id="8030"/>
    <lineage>
        <taxon>Eukaryota</taxon>
        <taxon>Metazoa</taxon>
        <taxon>Chordata</taxon>
        <taxon>Craniata</taxon>
        <taxon>Vertebrata</taxon>
        <taxon>Euteleostomi</taxon>
        <taxon>Actinopterygii</taxon>
        <taxon>Neopterygii</taxon>
        <taxon>Teleostei</taxon>
        <taxon>Protacanthopterygii</taxon>
        <taxon>Salmoniformes</taxon>
        <taxon>Salmonidae</taxon>
        <taxon>Salmoninae</taxon>
        <taxon>Salmo</taxon>
    </lineage>
</organism>
<evidence type="ECO:0000250" key="1"/>
<evidence type="ECO:0000250" key="2">
    <source>
        <dbReference type="UniProtKB" id="P03901"/>
    </source>
</evidence>
<evidence type="ECO:0000255" key="3"/>
<evidence type="ECO:0000305" key="4"/>